<keyword id="KW-0067">ATP-binding</keyword>
<keyword id="KW-0173">Coenzyme A biosynthesis</keyword>
<keyword id="KW-0963">Cytoplasm</keyword>
<keyword id="KW-0418">Kinase</keyword>
<keyword id="KW-0547">Nucleotide-binding</keyword>
<keyword id="KW-0808">Transferase</keyword>
<organism>
    <name type="scientific">Buchnera aphidicola subsp. Schizaphis graminum (strain Sg)</name>
    <dbReference type="NCBI Taxonomy" id="198804"/>
    <lineage>
        <taxon>Bacteria</taxon>
        <taxon>Pseudomonadati</taxon>
        <taxon>Pseudomonadota</taxon>
        <taxon>Gammaproteobacteria</taxon>
        <taxon>Enterobacterales</taxon>
        <taxon>Erwiniaceae</taxon>
        <taxon>Buchnera</taxon>
    </lineage>
</organism>
<protein>
    <recommendedName>
        <fullName evidence="1">Dephospho-CoA kinase</fullName>
        <ecNumber evidence="1">2.7.1.24</ecNumber>
    </recommendedName>
    <alternativeName>
        <fullName evidence="1">Dephosphocoenzyme A kinase</fullName>
    </alternativeName>
</protein>
<proteinExistence type="inferred from homology"/>
<feature type="chain" id="PRO_0000172920" description="Dephospho-CoA kinase">
    <location>
        <begin position="1"/>
        <end position="210"/>
    </location>
</feature>
<feature type="domain" description="DPCK" evidence="1">
    <location>
        <begin position="4"/>
        <end position="201"/>
    </location>
</feature>
<feature type="binding site" evidence="1">
    <location>
        <begin position="12"/>
        <end position="17"/>
    </location>
    <ligand>
        <name>ATP</name>
        <dbReference type="ChEBI" id="CHEBI:30616"/>
    </ligand>
</feature>
<dbReference type="EC" id="2.7.1.24" evidence="1"/>
<dbReference type="EMBL" id="AE013218">
    <property type="protein sequence ID" value="AAM67761.1"/>
    <property type="molecule type" value="Genomic_DNA"/>
</dbReference>
<dbReference type="RefSeq" id="WP_011053728.1">
    <property type="nucleotide sequence ID" value="NC_004061.1"/>
</dbReference>
<dbReference type="SMR" id="Q8K9U1"/>
<dbReference type="STRING" id="198804.BUsg_197"/>
<dbReference type="GeneID" id="93003664"/>
<dbReference type="KEGG" id="bas:BUsg_197"/>
<dbReference type="eggNOG" id="COG0237">
    <property type="taxonomic scope" value="Bacteria"/>
</dbReference>
<dbReference type="HOGENOM" id="CLU_057180_1_2_6"/>
<dbReference type="UniPathway" id="UPA00241">
    <property type="reaction ID" value="UER00356"/>
</dbReference>
<dbReference type="Proteomes" id="UP000000416">
    <property type="component" value="Chromosome"/>
</dbReference>
<dbReference type="GO" id="GO:0005737">
    <property type="term" value="C:cytoplasm"/>
    <property type="evidence" value="ECO:0007669"/>
    <property type="project" value="UniProtKB-SubCell"/>
</dbReference>
<dbReference type="GO" id="GO:0005524">
    <property type="term" value="F:ATP binding"/>
    <property type="evidence" value="ECO:0007669"/>
    <property type="project" value="UniProtKB-UniRule"/>
</dbReference>
<dbReference type="GO" id="GO:0004140">
    <property type="term" value="F:dephospho-CoA kinase activity"/>
    <property type="evidence" value="ECO:0007669"/>
    <property type="project" value="UniProtKB-UniRule"/>
</dbReference>
<dbReference type="GO" id="GO:0015937">
    <property type="term" value="P:coenzyme A biosynthetic process"/>
    <property type="evidence" value="ECO:0007669"/>
    <property type="project" value="UniProtKB-UniRule"/>
</dbReference>
<dbReference type="CDD" id="cd02022">
    <property type="entry name" value="DPCK"/>
    <property type="match status" value="1"/>
</dbReference>
<dbReference type="Gene3D" id="3.40.50.300">
    <property type="entry name" value="P-loop containing nucleotide triphosphate hydrolases"/>
    <property type="match status" value="1"/>
</dbReference>
<dbReference type="HAMAP" id="MF_00376">
    <property type="entry name" value="Dephospho_CoA_kinase"/>
    <property type="match status" value="1"/>
</dbReference>
<dbReference type="InterPro" id="IPR001977">
    <property type="entry name" value="Depp_CoAkinase"/>
</dbReference>
<dbReference type="InterPro" id="IPR027417">
    <property type="entry name" value="P-loop_NTPase"/>
</dbReference>
<dbReference type="NCBIfam" id="TIGR00152">
    <property type="entry name" value="dephospho-CoA kinase"/>
    <property type="match status" value="1"/>
</dbReference>
<dbReference type="PANTHER" id="PTHR10695:SF46">
    <property type="entry name" value="BIFUNCTIONAL COENZYME A SYNTHASE-RELATED"/>
    <property type="match status" value="1"/>
</dbReference>
<dbReference type="PANTHER" id="PTHR10695">
    <property type="entry name" value="DEPHOSPHO-COA KINASE-RELATED"/>
    <property type="match status" value="1"/>
</dbReference>
<dbReference type="Pfam" id="PF01121">
    <property type="entry name" value="CoaE"/>
    <property type="match status" value="1"/>
</dbReference>
<dbReference type="SUPFAM" id="SSF52540">
    <property type="entry name" value="P-loop containing nucleoside triphosphate hydrolases"/>
    <property type="match status" value="1"/>
</dbReference>
<dbReference type="PROSITE" id="PS51219">
    <property type="entry name" value="DPCK"/>
    <property type="match status" value="1"/>
</dbReference>
<sequence>MIYIVALTGGICSGKTTVSDRFKKIGINVIDTDVIGRKIIEKNKKISDSIKKKFGKKILNKDNSINRFLLRNCIFNEKKSRLWLENILHPEILKKSKKKIKLIQSTWCLWVVPLLFEKKIQKKANRILLIDTPIRIQIRRMIKRDKININEAKKIISYQVRRKKRISLSDDIILNKNKNIEKLSLYIHYLNNFYIYLSKQNNPKNMKKII</sequence>
<name>COAE_BUCAP</name>
<accession>Q8K9U1</accession>
<gene>
    <name evidence="1" type="primary">coaE</name>
    <name type="ordered locus">BUsg_197</name>
</gene>
<reference key="1">
    <citation type="journal article" date="2002" name="Science">
        <title>50 million years of genomic stasis in endosymbiotic bacteria.</title>
        <authorList>
            <person name="Tamas I."/>
            <person name="Klasson L."/>
            <person name="Canbaeck B."/>
            <person name="Naeslund A.K."/>
            <person name="Eriksson A.-S."/>
            <person name="Wernegreen J.J."/>
            <person name="Sandstroem J.P."/>
            <person name="Moran N.A."/>
            <person name="Andersson S.G.E."/>
        </authorList>
    </citation>
    <scope>NUCLEOTIDE SEQUENCE [LARGE SCALE GENOMIC DNA]</scope>
    <source>
        <strain>Sg</strain>
    </source>
</reference>
<comment type="function">
    <text evidence="1">Catalyzes the phosphorylation of the 3'-hydroxyl group of dephosphocoenzyme A to form coenzyme A.</text>
</comment>
<comment type="catalytic activity">
    <reaction evidence="1">
        <text>3'-dephospho-CoA + ATP = ADP + CoA + H(+)</text>
        <dbReference type="Rhea" id="RHEA:18245"/>
        <dbReference type="ChEBI" id="CHEBI:15378"/>
        <dbReference type="ChEBI" id="CHEBI:30616"/>
        <dbReference type="ChEBI" id="CHEBI:57287"/>
        <dbReference type="ChEBI" id="CHEBI:57328"/>
        <dbReference type="ChEBI" id="CHEBI:456216"/>
        <dbReference type="EC" id="2.7.1.24"/>
    </reaction>
</comment>
<comment type="pathway">
    <text evidence="1">Cofactor biosynthesis; coenzyme A biosynthesis; CoA from (R)-pantothenate: step 5/5.</text>
</comment>
<comment type="subcellular location">
    <subcellularLocation>
        <location evidence="1">Cytoplasm</location>
    </subcellularLocation>
</comment>
<comment type="similarity">
    <text evidence="1">Belongs to the CoaE family.</text>
</comment>
<evidence type="ECO:0000255" key="1">
    <source>
        <dbReference type="HAMAP-Rule" id="MF_00376"/>
    </source>
</evidence>